<proteinExistence type="inferred from homology"/>
<protein>
    <recommendedName>
        <fullName evidence="1">Uroporphyrinogen decarboxylase</fullName>
        <shortName evidence="1">UPD</shortName>
        <shortName evidence="1">URO-D</shortName>
        <ecNumber evidence="1">4.1.1.37</ecNumber>
    </recommendedName>
</protein>
<dbReference type="EC" id="4.1.1.37" evidence="1"/>
<dbReference type="EMBL" id="CP000103">
    <property type="protein sequence ID" value="ABB74012.1"/>
    <property type="molecule type" value="Genomic_DNA"/>
</dbReference>
<dbReference type="RefSeq" id="WP_011380062.1">
    <property type="nucleotide sequence ID" value="NC_007614.1"/>
</dbReference>
<dbReference type="SMR" id="Q2YB59"/>
<dbReference type="STRING" id="323848.Nmul_A0705"/>
<dbReference type="KEGG" id="nmu:Nmul_A0705"/>
<dbReference type="eggNOG" id="COG0407">
    <property type="taxonomic scope" value="Bacteria"/>
</dbReference>
<dbReference type="HOGENOM" id="CLU_040933_0_0_4"/>
<dbReference type="OrthoDB" id="9806656at2"/>
<dbReference type="UniPathway" id="UPA00251">
    <property type="reaction ID" value="UER00321"/>
</dbReference>
<dbReference type="Proteomes" id="UP000002718">
    <property type="component" value="Chromosome"/>
</dbReference>
<dbReference type="GO" id="GO:0005829">
    <property type="term" value="C:cytosol"/>
    <property type="evidence" value="ECO:0007669"/>
    <property type="project" value="TreeGrafter"/>
</dbReference>
<dbReference type="GO" id="GO:0004853">
    <property type="term" value="F:uroporphyrinogen decarboxylase activity"/>
    <property type="evidence" value="ECO:0007669"/>
    <property type="project" value="UniProtKB-UniRule"/>
</dbReference>
<dbReference type="GO" id="GO:0019353">
    <property type="term" value="P:protoporphyrinogen IX biosynthetic process from glutamate"/>
    <property type="evidence" value="ECO:0007669"/>
    <property type="project" value="TreeGrafter"/>
</dbReference>
<dbReference type="CDD" id="cd00717">
    <property type="entry name" value="URO-D"/>
    <property type="match status" value="1"/>
</dbReference>
<dbReference type="FunFam" id="3.20.20.210:FF:000001">
    <property type="entry name" value="Uroporphyrinogen decarboxylase"/>
    <property type="match status" value="1"/>
</dbReference>
<dbReference type="Gene3D" id="3.20.20.210">
    <property type="match status" value="1"/>
</dbReference>
<dbReference type="HAMAP" id="MF_00218">
    <property type="entry name" value="URO_D"/>
    <property type="match status" value="1"/>
</dbReference>
<dbReference type="InterPro" id="IPR038071">
    <property type="entry name" value="UROD/MetE-like_sf"/>
</dbReference>
<dbReference type="InterPro" id="IPR006361">
    <property type="entry name" value="Uroporphyrinogen_deCO2ase_HemE"/>
</dbReference>
<dbReference type="InterPro" id="IPR000257">
    <property type="entry name" value="Uroporphyrinogen_deCOase"/>
</dbReference>
<dbReference type="NCBIfam" id="TIGR01464">
    <property type="entry name" value="hemE"/>
    <property type="match status" value="1"/>
</dbReference>
<dbReference type="PANTHER" id="PTHR21091">
    <property type="entry name" value="METHYLTETRAHYDROFOLATE:HOMOCYSTEINE METHYLTRANSFERASE RELATED"/>
    <property type="match status" value="1"/>
</dbReference>
<dbReference type="PANTHER" id="PTHR21091:SF169">
    <property type="entry name" value="UROPORPHYRINOGEN DECARBOXYLASE"/>
    <property type="match status" value="1"/>
</dbReference>
<dbReference type="Pfam" id="PF01208">
    <property type="entry name" value="URO-D"/>
    <property type="match status" value="1"/>
</dbReference>
<dbReference type="SUPFAM" id="SSF51726">
    <property type="entry name" value="UROD/MetE-like"/>
    <property type="match status" value="1"/>
</dbReference>
<dbReference type="PROSITE" id="PS00906">
    <property type="entry name" value="UROD_1"/>
    <property type="match status" value="1"/>
</dbReference>
<dbReference type="PROSITE" id="PS00907">
    <property type="entry name" value="UROD_2"/>
    <property type="match status" value="1"/>
</dbReference>
<evidence type="ECO:0000255" key="1">
    <source>
        <dbReference type="HAMAP-Rule" id="MF_00218"/>
    </source>
</evidence>
<comment type="function">
    <text evidence="1">Catalyzes the decarboxylation of four acetate groups of uroporphyrinogen-III to yield coproporphyrinogen-III.</text>
</comment>
<comment type="catalytic activity">
    <reaction evidence="1">
        <text>uroporphyrinogen III + 4 H(+) = coproporphyrinogen III + 4 CO2</text>
        <dbReference type="Rhea" id="RHEA:19865"/>
        <dbReference type="ChEBI" id="CHEBI:15378"/>
        <dbReference type="ChEBI" id="CHEBI:16526"/>
        <dbReference type="ChEBI" id="CHEBI:57308"/>
        <dbReference type="ChEBI" id="CHEBI:57309"/>
        <dbReference type="EC" id="4.1.1.37"/>
    </reaction>
</comment>
<comment type="pathway">
    <text evidence="1">Porphyrin-containing compound metabolism; protoporphyrin-IX biosynthesis; coproporphyrinogen-III from 5-aminolevulinate: step 4/4.</text>
</comment>
<comment type="subunit">
    <text evidence="1">Homodimer.</text>
</comment>
<comment type="subcellular location">
    <subcellularLocation>
        <location evidence="1">Cytoplasm</location>
    </subcellularLocation>
</comment>
<comment type="similarity">
    <text evidence="1">Belongs to the uroporphyrinogen decarboxylase family.</text>
</comment>
<reference key="1">
    <citation type="submission" date="2005-08" db="EMBL/GenBank/DDBJ databases">
        <title>Complete sequence of chromosome 1 of Nitrosospira multiformis ATCC 25196.</title>
        <authorList>
            <person name="Copeland A."/>
            <person name="Lucas S."/>
            <person name="Lapidus A."/>
            <person name="Barry K."/>
            <person name="Detter J.C."/>
            <person name="Glavina T."/>
            <person name="Hammon N."/>
            <person name="Israni S."/>
            <person name="Pitluck S."/>
            <person name="Chain P."/>
            <person name="Malfatti S."/>
            <person name="Shin M."/>
            <person name="Vergez L."/>
            <person name="Schmutz J."/>
            <person name="Larimer F."/>
            <person name="Land M."/>
            <person name="Hauser L."/>
            <person name="Kyrpides N."/>
            <person name="Lykidis A."/>
            <person name="Richardson P."/>
        </authorList>
    </citation>
    <scope>NUCLEOTIDE SEQUENCE [LARGE SCALE GENOMIC DNA]</scope>
    <source>
        <strain>ATCC 25196 / NCIMB 11849 / C 71</strain>
    </source>
</reference>
<accession>Q2YB59</accession>
<feature type="chain" id="PRO_1000023930" description="Uroporphyrinogen decarboxylase">
    <location>
        <begin position="1"/>
        <end position="365"/>
    </location>
</feature>
<feature type="binding site" evidence="1">
    <location>
        <begin position="27"/>
        <end position="31"/>
    </location>
    <ligand>
        <name>substrate</name>
    </ligand>
</feature>
<feature type="binding site" evidence="1">
    <location>
        <position position="77"/>
    </location>
    <ligand>
        <name>substrate</name>
    </ligand>
</feature>
<feature type="binding site" evidence="1">
    <location>
        <position position="154"/>
    </location>
    <ligand>
        <name>substrate</name>
    </ligand>
</feature>
<feature type="binding site" evidence="1">
    <location>
        <position position="209"/>
    </location>
    <ligand>
        <name>substrate</name>
    </ligand>
</feature>
<feature type="binding site" evidence="1">
    <location>
        <position position="327"/>
    </location>
    <ligand>
        <name>substrate</name>
    </ligand>
</feature>
<feature type="site" description="Transition state stabilizer" evidence="1">
    <location>
        <position position="77"/>
    </location>
</feature>
<name>DCUP_NITMU</name>
<sequence>MTRLKNDTLLRALLRQPTEYTPVWLMRQAGRYLSEYNQTRARAGNFLALCKNPDFATEVTMQPLARFPLDAAILFSDILTIPDAMGLGLYFAEGEGPRFERPLREEWEIRALTVPDPAVHLRYVMDAVSQIRKTLDNRVPLIGFSGSPFTLACYMVEGAGGTDFRQIKTMLYRRPDLLHHILDINAQAVTAYLNAQIESGAQAVMIFDTWGGALSHAAYQQFSLRYMTQVLAGLRRYQGAERIPSIVFTKGGGLWLESIADSGCDAVGLDWTVNIGDARRRVGHKVALQGNLDPAVLFAEPGVIAAEVEQILASFGEGSGHIFNLGHGISQFTPPENALTLVEAVHSLSRRFHRADAEGNNSFGS</sequence>
<keyword id="KW-0963">Cytoplasm</keyword>
<keyword id="KW-0210">Decarboxylase</keyword>
<keyword id="KW-0456">Lyase</keyword>
<keyword id="KW-0627">Porphyrin biosynthesis</keyword>
<keyword id="KW-1185">Reference proteome</keyword>
<organism>
    <name type="scientific">Nitrosospira multiformis (strain ATCC 25196 / NCIMB 11849 / C 71)</name>
    <dbReference type="NCBI Taxonomy" id="323848"/>
    <lineage>
        <taxon>Bacteria</taxon>
        <taxon>Pseudomonadati</taxon>
        <taxon>Pseudomonadota</taxon>
        <taxon>Betaproteobacteria</taxon>
        <taxon>Nitrosomonadales</taxon>
        <taxon>Nitrosomonadaceae</taxon>
        <taxon>Nitrosospira</taxon>
    </lineage>
</organism>
<gene>
    <name evidence="1" type="primary">hemE</name>
    <name type="ordered locus">Nmul_A0705</name>
</gene>